<organism>
    <name type="scientific">Burkholderia multivorans (strain ATCC 17616 / 249)</name>
    <dbReference type="NCBI Taxonomy" id="395019"/>
    <lineage>
        <taxon>Bacteria</taxon>
        <taxon>Pseudomonadati</taxon>
        <taxon>Pseudomonadota</taxon>
        <taxon>Betaproteobacteria</taxon>
        <taxon>Burkholderiales</taxon>
        <taxon>Burkholderiaceae</taxon>
        <taxon>Burkholderia</taxon>
        <taxon>Burkholderia cepacia complex</taxon>
    </lineage>
</organism>
<protein>
    <recommendedName>
        <fullName evidence="1">Small ribosomal subunit protein bS6</fullName>
    </recommendedName>
    <alternativeName>
        <fullName evidence="3">30S ribosomal protein S6</fullName>
    </alternativeName>
</protein>
<comment type="function">
    <text evidence="1">Binds together with bS18 to 16S ribosomal RNA.</text>
</comment>
<comment type="similarity">
    <text evidence="1">Belongs to the bacterial ribosomal protein bS6 family.</text>
</comment>
<sequence length="124" mass="14320">MRHYEIVFIVHPDQSEQVPAMIERYKTTITSHGGQIHRVEDWGRRQLAYMIEKLAKAHYVCMNIECDQTTLDELEHAFKFNDAVLRHLIVKMKKAETGPSPMMKEVQREEAKKAAAAQPTEAQA</sequence>
<gene>
    <name evidence="1" type="primary">rpsF</name>
    <name type="ordered locus">Bmul_1400</name>
    <name type="ordered locus">BMULJ_01843</name>
</gene>
<accession>A9AJW1</accession>
<proteinExistence type="inferred from homology"/>
<dbReference type="EMBL" id="CP000868">
    <property type="protein sequence ID" value="ABX15088.1"/>
    <property type="molecule type" value="Genomic_DNA"/>
</dbReference>
<dbReference type="EMBL" id="AP009385">
    <property type="protein sequence ID" value="BAG43763.1"/>
    <property type="molecule type" value="Genomic_DNA"/>
</dbReference>
<dbReference type="RefSeq" id="WP_006402295.1">
    <property type="nucleotide sequence ID" value="NC_010804.1"/>
</dbReference>
<dbReference type="SMR" id="A9AJW1"/>
<dbReference type="STRING" id="395019.BMULJ_01843"/>
<dbReference type="GeneID" id="98105606"/>
<dbReference type="KEGG" id="bmj:BMULJ_01843"/>
<dbReference type="KEGG" id="bmu:Bmul_1400"/>
<dbReference type="eggNOG" id="COG0360">
    <property type="taxonomic scope" value="Bacteria"/>
</dbReference>
<dbReference type="HOGENOM" id="CLU_113441_6_1_4"/>
<dbReference type="Proteomes" id="UP000008815">
    <property type="component" value="Chromosome 1"/>
</dbReference>
<dbReference type="GO" id="GO:0022627">
    <property type="term" value="C:cytosolic small ribosomal subunit"/>
    <property type="evidence" value="ECO:0007669"/>
    <property type="project" value="TreeGrafter"/>
</dbReference>
<dbReference type="GO" id="GO:0070181">
    <property type="term" value="F:small ribosomal subunit rRNA binding"/>
    <property type="evidence" value="ECO:0007669"/>
    <property type="project" value="TreeGrafter"/>
</dbReference>
<dbReference type="GO" id="GO:0003735">
    <property type="term" value="F:structural constituent of ribosome"/>
    <property type="evidence" value="ECO:0007669"/>
    <property type="project" value="InterPro"/>
</dbReference>
<dbReference type="GO" id="GO:0006412">
    <property type="term" value="P:translation"/>
    <property type="evidence" value="ECO:0007669"/>
    <property type="project" value="UniProtKB-UniRule"/>
</dbReference>
<dbReference type="CDD" id="cd00473">
    <property type="entry name" value="bS6"/>
    <property type="match status" value="1"/>
</dbReference>
<dbReference type="Gene3D" id="3.30.70.60">
    <property type="match status" value="1"/>
</dbReference>
<dbReference type="HAMAP" id="MF_00360">
    <property type="entry name" value="Ribosomal_bS6"/>
    <property type="match status" value="1"/>
</dbReference>
<dbReference type="InterPro" id="IPR000529">
    <property type="entry name" value="Ribosomal_bS6"/>
</dbReference>
<dbReference type="InterPro" id="IPR035980">
    <property type="entry name" value="Ribosomal_bS6_sf"/>
</dbReference>
<dbReference type="InterPro" id="IPR020814">
    <property type="entry name" value="Ribosomal_S6_plastid/chlpt"/>
</dbReference>
<dbReference type="InterPro" id="IPR014717">
    <property type="entry name" value="Transl_elong_EF1B/ribsomal_bS6"/>
</dbReference>
<dbReference type="NCBIfam" id="TIGR00166">
    <property type="entry name" value="S6"/>
    <property type="match status" value="1"/>
</dbReference>
<dbReference type="PANTHER" id="PTHR21011">
    <property type="entry name" value="MITOCHONDRIAL 28S RIBOSOMAL PROTEIN S6"/>
    <property type="match status" value="1"/>
</dbReference>
<dbReference type="PANTHER" id="PTHR21011:SF1">
    <property type="entry name" value="SMALL RIBOSOMAL SUBUNIT PROTEIN BS6M"/>
    <property type="match status" value="1"/>
</dbReference>
<dbReference type="Pfam" id="PF01250">
    <property type="entry name" value="Ribosomal_S6"/>
    <property type="match status" value="1"/>
</dbReference>
<dbReference type="SUPFAM" id="SSF54995">
    <property type="entry name" value="Ribosomal protein S6"/>
    <property type="match status" value="1"/>
</dbReference>
<reference key="1">
    <citation type="submission" date="2007-10" db="EMBL/GenBank/DDBJ databases">
        <title>Complete sequence of chromosome 1 of Burkholderia multivorans ATCC 17616.</title>
        <authorList>
            <person name="Copeland A."/>
            <person name="Lucas S."/>
            <person name="Lapidus A."/>
            <person name="Barry K."/>
            <person name="Glavina del Rio T."/>
            <person name="Dalin E."/>
            <person name="Tice H."/>
            <person name="Pitluck S."/>
            <person name="Chain P."/>
            <person name="Malfatti S."/>
            <person name="Shin M."/>
            <person name="Vergez L."/>
            <person name="Schmutz J."/>
            <person name="Larimer F."/>
            <person name="Land M."/>
            <person name="Hauser L."/>
            <person name="Kyrpides N."/>
            <person name="Kim E."/>
            <person name="Tiedje J."/>
            <person name="Richardson P."/>
        </authorList>
    </citation>
    <scope>NUCLEOTIDE SEQUENCE [LARGE SCALE GENOMIC DNA]</scope>
    <source>
        <strain>ATCC 17616 / 249</strain>
    </source>
</reference>
<reference key="2">
    <citation type="submission" date="2007-04" db="EMBL/GenBank/DDBJ databases">
        <title>Complete genome sequence of Burkholderia multivorans ATCC 17616.</title>
        <authorList>
            <person name="Ohtsubo Y."/>
            <person name="Yamashita A."/>
            <person name="Kurokawa K."/>
            <person name="Takami H."/>
            <person name="Yuhara S."/>
            <person name="Nishiyama E."/>
            <person name="Endo R."/>
            <person name="Miyazaki R."/>
            <person name="Ono A."/>
            <person name="Yano K."/>
            <person name="Ito M."/>
            <person name="Sota M."/>
            <person name="Yuji N."/>
            <person name="Hattori M."/>
            <person name="Tsuda M."/>
        </authorList>
    </citation>
    <scope>NUCLEOTIDE SEQUENCE [LARGE SCALE GENOMIC DNA]</scope>
    <source>
        <strain>ATCC 17616 / 249</strain>
    </source>
</reference>
<name>RS6_BURM1</name>
<keyword id="KW-1185">Reference proteome</keyword>
<keyword id="KW-0687">Ribonucleoprotein</keyword>
<keyword id="KW-0689">Ribosomal protein</keyword>
<keyword id="KW-0694">RNA-binding</keyword>
<keyword id="KW-0699">rRNA-binding</keyword>
<evidence type="ECO:0000255" key="1">
    <source>
        <dbReference type="HAMAP-Rule" id="MF_00360"/>
    </source>
</evidence>
<evidence type="ECO:0000256" key="2">
    <source>
        <dbReference type="SAM" id="MobiDB-lite"/>
    </source>
</evidence>
<evidence type="ECO:0000305" key="3"/>
<feature type="chain" id="PRO_1000120719" description="Small ribosomal subunit protein bS6">
    <location>
        <begin position="1"/>
        <end position="124"/>
    </location>
</feature>
<feature type="region of interest" description="Disordered" evidence="2">
    <location>
        <begin position="96"/>
        <end position="124"/>
    </location>
</feature>
<feature type="compositionally biased region" description="Low complexity" evidence="2">
    <location>
        <begin position="114"/>
        <end position="124"/>
    </location>
</feature>